<keyword id="KW-0460">Magnesium</keyword>
<keyword id="KW-0464">Manganese</keyword>
<keyword id="KW-0474">Menaquinone biosynthesis</keyword>
<keyword id="KW-0479">Metal-binding</keyword>
<keyword id="KW-1185">Reference proteome</keyword>
<keyword id="KW-0786">Thiamine pyrophosphate</keyword>
<keyword id="KW-0808">Transferase</keyword>
<gene>
    <name evidence="1" type="primary">menD</name>
    <name type="ordered locus">Hlac_1290</name>
</gene>
<name>MEND_HALLT</name>
<reference key="1">
    <citation type="journal article" date="2016" name="Stand. Genomic Sci.">
        <title>Complete genome sequence of the Antarctic Halorubrum lacusprofundi type strain ACAM 34.</title>
        <authorList>
            <person name="Anderson I.J."/>
            <person name="DasSarma P."/>
            <person name="Lucas S."/>
            <person name="Copeland A."/>
            <person name="Lapidus A."/>
            <person name="Del Rio T.G."/>
            <person name="Tice H."/>
            <person name="Dalin E."/>
            <person name="Bruce D.C."/>
            <person name="Goodwin L."/>
            <person name="Pitluck S."/>
            <person name="Sims D."/>
            <person name="Brettin T.S."/>
            <person name="Detter J.C."/>
            <person name="Han C.S."/>
            <person name="Larimer F."/>
            <person name="Hauser L."/>
            <person name="Land M."/>
            <person name="Ivanova N."/>
            <person name="Richardson P."/>
            <person name="Cavicchioli R."/>
            <person name="DasSarma S."/>
            <person name="Woese C.R."/>
            <person name="Kyrpides N.C."/>
        </authorList>
    </citation>
    <scope>NUCLEOTIDE SEQUENCE [LARGE SCALE GENOMIC DNA]</scope>
    <source>
        <strain>ATCC 49239 / DSM 5036 / JCM 8891 / ACAM 34</strain>
    </source>
</reference>
<dbReference type="EC" id="2.2.1.9" evidence="1"/>
<dbReference type="EMBL" id="CP001365">
    <property type="protein sequence ID" value="ACM56882.1"/>
    <property type="molecule type" value="Genomic_DNA"/>
</dbReference>
<dbReference type="RefSeq" id="WP_015910024.1">
    <property type="nucleotide sequence ID" value="NC_012029.1"/>
</dbReference>
<dbReference type="SMR" id="B9LNE4"/>
<dbReference type="GeneID" id="7399385"/>
<dbReference type="KEGG" id="hla:Hlac_1290"/>
<dbReference type="eggNOG" id="arCOG04611">
    <property type="taxonomic scope" value="Archaea"/>
</dbReference>
<dbReference type="HOGENOM" id="CLU_006051_3_0_2"/>
<dbReference type="UniPathway" id="UPA00079"/>
<dbReference type="UniPathway" id="UPA01057">
    <property type="reaction ID" value="UER00164"/>
</dbReference>
<dbReference type="Proteomes" id="UP000000740">
    <property type="component" value="Chromosome 1"/>
</dbReference>
<dbReference type="GO" id="GO:0070204">
    <property type="term" value="F:2-succinyl-5-enolpyruvyl-6-hydroxy-3-cyclohexene-1-carboxylic-acid synthase activity"/>
    <property type="evidence" value="ECO:0007669"/>
    <property type="project" value="UniProtKB-UniRule"/>
</dbReference>
<dbReference type="GO" id="GO:0000287">
    <property type="term" value="F:magnesium ion binding"/>
    <property type="evidence" value="ECO:0007669"/>
    <property type="project" value="UniProtKB-UniRule"/>
</dbReference>
<dbReference type="GO" id="GO:0030145">
    <property type="term" value="F:manganese ion binding"/>
    <property type="evidence" value="ECO:0007669"/>
    <property type="project" value="UniProtKB-UniRule"/>
</dbReference>
<dbReference type="GO" id="GO:0030976">
    <property type="term" value="F:thiamine pyrophosphate binding"/>
    <property type="evidence" value="ECO:0007669"/>
    <property type="project" value="UniProtKB-UniRule"/>
</dbReference>
<dbReference type="GO" id="GO:0009234">
    <property type="term" value="P:menaquinone biosynthetic process"/>
    <property type="evidence" value="ECO:0007669"/>
    <property type="project" value="UniProtKB-UniRule"/>
</dbReference>
<dbReference type="GO" id="GO:0006082">
    <property type="term" value="P:organic acid metabolic process"/>
    <property type="evidence" value="ECO:0007669"/>
    <property type="project" value="UniProtKB-ARBA"/>
</dbReference>
<dbReference type="GO" id="GO:0044272">
    <property type="term" value="P:sulfur compound biosynthetic process"/>
    <property type="evidence" value="ECO:0007669"/>
    <property type="project" value="UniProtKB-ARBA"/>
</dbReference>
<dbReference type="CDD" id="cd07037">
    <property type="entry name" value="TPP_PYR_MenD"/>
    <property type="match status" value="1"/>
</dbReference>
<dbReference type="CDD" id="cd02009">
    <property type="entry name" value="TPP_SHCHC_synthase"/>
    <property type="match status" value="1"/>
</dbReference>
<dbReference type="Gene3D" id="3.40.50.970">
    <property type="match status" value="2"/>
</dbReference>
<dbReference type="Gene3D" id="3.40.50.1220">
    <property type="entry name" value="TPP-binding domain"/>
    <property type="match status" value="1"/>
</dbReference>
<dbReference type="HAMAP" id="MF_01659">
    <property type="entry name" value="MenD"/>
    <property type="match status" value="1"/>
</dbReference>
<dbReference type="InterPro" id="IPR029035">
    <property type="entry name" value="DHS-like_NAD/FAD-binding_dom"/>
</dbReference>
<dbReference type="InterPro" id="IPR004433">
    <property type="entry name" value="MenaQ_synth_MenD"/>
</dbReference>
<dbReference type="InterPro" id="IPR032264">
    <property type="entry name" value="MenD_middle"/>
</dbReference>
<dbReference type="InterPro" id="IPR029061">
    <property type="entry name" value="THDP-binding"/>
</dbReference>
<dbReference type="InterPro" id="IPR012001">
    <property type="entry name" value="Thiamin_PyroP_enz_TPP-bd_dom"/>
</dbReference>
<dbReference type="NCBIfam" id="TIGR00173">
    <property type="entry name" value="menD"/>
    <property type="match status" value="1"/>
</dbReference>
<dbReference type="PANTHER" id="PTHR42916">
    <property type="entry name" value="2-SUCCINYL-5-ENOLPYRUVYL-6-HYDROXY-3-CYCLOHEXENE-1-CARBOXYLATE SYNTHASE"/>
    <property type="match status" value="1"/>
</dbReference>
<dbReference type="PANTHER" id="PTHR42916:SF1">
    <property type="entry name" value="PROTEIN PHYLLO, CHLOROPLASTIC"/>
    <property type="match status" value="1"/>
</dbReference>
<dbReference type="Pfam" id="PF16582">
    <property type="entry name" value="TPP_enzyme_M_2"/>
    <property type="match status" value="1"/>
</dbReference>
<dbReference type="Pfam" id="PF02776">
    <property type="entry name" value="TPP_enzyme_N"/>
    <property type="match status" value="1"/>
</dbReference>
<dbReference type="PIRSF" id="PIRSF004983">
    <property type="entry name" value="MenD"/>
    <property type="match status" value="1"/>
</dbReference>
<dbReference type="SUPFAM" id="SSF52467">
    <property type="entry name" value="DHS-like NAD/FAD-binding domain"/>
    <property type="match status" value="1"/>
</dbReference>
<dbReference type="SUPFAM" id="SSF52518">
    <property type="entry name" value="Thiamin diphosphate-binding fold (THDP-binding)"/>
    <property type="match status" value="2"/>
</dbReference>
<proteinExistence type="inferred from homology"/>
<protein>
    <recommendedName>
        <fullName evidence="1">2-succinyl-5-enolpyruvyl-6-hydroxy-3-cyclohexene-1-carboxylate synthase</fullName>
        <shortName evidence="1">SEPHCHC synthase</shortName>
        <ecNumber evidence="1">2.2.1.9</ecNumber>
    </recommendedName>
    <alternativeName>
        <fullName evidence="1">Menaquinone biosynthesis protein MenD</fullName>
    </alternativeName>
</protein>
<evidence type="ECO:0000255" key="1">
    <source>
        <dbReference type="HAMAP-Rule" id="MF_01659"/>
    </source>
</evidence>
<evidence type="ECO:0000256" key="2">
    <source>
        <dbReference type="SAM" id="MobiDB-lite"/>
    </source>
</evidence>
<accession>B9LNE4</accession>
<sequence>MTAPNRNTLWARALIDELVAAGVDAVVASPGSRSTPLTVAAARTDDLRVFSQLDERSAAYFALGRARRTGKVTPLICTSGTAAANYHPAVMEASEARVPLLALTADRPPELRDSGANQTADQEKLYGDAVRFYKDLPEPAPNDRALRSLRTTVARAVGTAEGADPGPVHLNVPFKKPLEPTRVLDDVPADLDPVAERGRDGPYVDVTPGSPEPGDDALRRLGNELMTTDRGLIVAGPADPPGLDAEAVTALSHATGFPILADPLSGVRFGGHTRVAPVIGAYDAYLSAEVAGEAGDADASDSWNDPEVVLRLGASPTSKRLRKYLAETGADQYQVDPAGRWREAEFAATDLVVAEPSRLCARLSRLVAGGDGDADWRAQWEDADRVAQEIHGRERDGDIPADDEPVEFHEGDALRVVADALPDPATLFVSNSMPVRDLDRFVGPTTTSVTALGNRGVSGIDGIVSSALGAGSATTDDLTLVVGDLALYHDTNGLLALDRCDVDATVVLINNDGGGIFHELPIESFEPEFTESFKTPHGIEFEPMADLHGLAYTRIDARPDSVESAGNVADDLADAYTGARDADGSHLIEVRTDAESSHRTRKRLEAAVDRAVHGDEAE</sequence>
<organism>
    <name type="scientific">Halorubrum lacusprofundi (strain ATCC 49239 / DSM 5036 / JCM 8891 / ACAM 34)</name>
    <dbReference type="NCBI Taxonomy" id="416348"/>
    <lineage>
        <taxon>Archaea</taxon>
        <taxon>Methanobacteriati</taxon>
        <taxon>Methanobacteriota</taxon>
        <taxon>Stenosarchaea group</taxon>
        <taxon>Halobacteria</taxon>
        <taxon>Halobacteriales</taxon>
        <taxon>Haloferacaceae</taxon>
        <taxon>Halorubrum</taxon>
    </lineage>
</organism>
<feature type="chain" id="PRO_1000187078" description="2-succinyl-5-enolpyruvyl-6-hydroxy-3-cyclohexene-1-carboxylate synthase">
    <location>
        <begin position="1"/>
        <end position="618"/>
    </location>
</feature>
<feature type="region of interest" description="Disordered" evidence="2">
    <location>
        <begin position="192"/>
        <end position="215"/>
    </location>
</feature>
<comment type="function">
    <text evidence="1">Catalyzes the thiamine diphosphate-dependent decarboxylation of 2-oxoglutarate and the subsequent addition of the resulting succinic semialdehyde-thiamine pyrophosphate anion to isochorismate to yield 2-succinyl-5-enolpyruvyl-6-hydroxy-3-cyclohexene-1-carboxylate (SEPHCHC).</text>
</comment>
<comment type="catalytic activity">
    <reaction evidence="1">
        <text>isochorismate + 2-oxoglutarate + H(+) = 5-enolpyruvoyl-6-hydroxy-2-succinyl-cyclohex-3-ene-1-carboxylate + CO2</text>
        <dbReference type="Rhea" id="RHEA:25593"/>
        <dbReference type="ChEBI" id="CHEBI:15378"/>
        <dbReference type="ChEBI" id="CHEBI:16526"/>
        <dbReference type="ChEBI" id="CHEBI:16810"/>
        <dbReference type="ChEBI" id="CHEBI:29780"/>
        <dbReference type="ChEBI" id="CHEBI:58818"/>
        <dbReference type="EC" id="2.2.1.9"/>
    </reaction>
</comment>
<comment type="cofactor">
    <cofactor evidence="1">
        <name>Mg(2+)</name>
        <dbReference type="ChEBI" id="CHEBI:18420"/>
    </cofactor>
    <cofactor evidence="1">
        <name>Mn(2+)</name>
        <dbReference type="ChEBI" id="CHEBI:29035"/>
    </cofactor>
</comment>
<comment type="cofactor">
    <cofactor evidence="1">
        <name>thiamine diphosphate</name>
        <dbReference type="ChEBI" id="CHEBI:58937"/>
    </cofactor>
    <text evidence="1">Binds 1 thiamine pyrophosphate per subunit.</text>
</comment>
<comment type="pathway">
    <text evidence="1">Quinol/quinone metabolism; 1,4-dihydroxy-2-naphthoate biosynthesis; 1,4-dihydroxy-2-naphthoate from chorismate: step 2/7.</text>
</comment>
<comment type="pathway">
    <text evidence="1">Quinol/quinone metabolism; menaquinone biosynthesis.</text>
</comment>
<comment type="subunit">
    <text evidence="1">Homodimer.</text>
</comment>
<comment type="similarity">
    <text evidence="1">Belongs to the TPP enzyme family. MenD subfamily.</text>
</comment>